<accession>A3MQF7</accession>
<reference key="1">
    <citation type="journal article" date="2010" name="Genome Biol. Evol.">
        <title>Continuing evolution of Burkholderia mallei through genome reduction and large-scale rearrangements.</title>
        <authorList>
            <person name="Losada L."/>
            <person name="Ronning C.M."/>
            <person name="DeShazer D."/>
            <person name="Woods D."/>
            <person name="Fedorova N."/>
            <person name="Kim H.S."/>
            <person name="Shabalina S.A."/>
            <person name="Pearson T.R."/>
            <person name="Brinkac L."/>
            <person name="Tan P."/>
            <person name="Nandi T."/>
            <person name="Crabtree J."/>
            <person name="Badger J."/>
            <person name="Beckstrom-Sternberg S."/>
            <person name="Saqib M."/>
            <person name="Schutzer S.E."/>
            <person name="Keim P."/>
            <person name="Nierman W.C."/>
        </authorList>
    </citation>
    <scope>NUCLEOTIDE SEQUENCE [LARGE SCALE GENOMIC DNA]</scope>
    <source>
        <strain>NCTC 10247</strain>
    </source>
</reference>
<sequence>MTDRIVPATLVFREDGTVVSPLYGDIYHSAAGALAQADHVFIRGNGLPERWRHERAFTIIETGFGTGCNFLATWAAWRADPSHCERLHFVSVEKHPFAREDLRRAAAHIVAYTTITTITPIAPLVDELANAWPALTPGVHRLEFDDGRVTLTLVFGDALDVLPNLALRAHAFYLDGFAPSKNADLWSPAIFKSLAKLADERATFATYTSSGAVKRALDEAGFAYRKVDGFAGKRAMLVGEFAPRWRVRRHEPPRAFSTDRRDAIVIGAGLAGCAVVERLAARGWHVTLIERRERIASEASGNPAGVFHPMIARDDNLAARLSRAGFLHALHRWRALERAGHAFSRSTHGLVQLATSDDEFERMRESIDALGVPAELASALSRDDARALLRTDVAHGGWLFAQGGSISPATLAAAQCAAAGDRLSRIVGVEIARLERGGDGRWRALDASGATIAQASVVVVANAADAARIAGLRHAPTQRVRGQLTLLPPGSAPAVPLPVIGDGYVVPLANGVTLTGATYEPDDTDATPREAGHRENLERLERLLPAFSANALDAGALAGRVGFRCVASDRLPLVGELGDEAAAAREAAALTGARLRDVPRATGLYGAFGYGSRGLVWAALGAELIAAQIDGEPWPLERELAEAIDPARFLVRALRHGRVA</sequence>
<organism>
    <name type="scientific">Burkholderia mallei (strain NCTC 10247)</name>
    <dbReference type="NCBI Taxonomy" id="320389"/>
    <lineage>
        <taxon>Bacteria</taxon>
        <taxon>Pseudomonadati</taxon>
        <taxon>Pseudomonadota</taxon>
        <taxon>Betaproteobacteria</taxon>
        <taxon>Burkholderiales</taxon>
        <taxon>Burkholderiaceae</taxon>
        <taxon>Burkholderia</taxon>
        <taxon>pseudomallei group</taxon>
    </lineage>
</organism>
<proteinExistence type="inferred from homology"/>
<gene>
    <name evidence="1" type="primary">mnmC</name>
    <name type="ordered locus">BMA10247_2973</name>
</gene>
<protein>
    <recommendedName>
        <fullName evidence="1">tRNA 5-methylaminomethyl-2-thiouridine biosynthesis bifunctional protein MnmC</fullName>
        <shortName evidence="1">tRNA mnm(5)s(2)U biosynthesis bifunctional protein</shortName>
    </recommendedName>
    <domain>
        <recommendedName>
            <fullName evidence="1">tRNA (mnm(5)s(2)U34)-methyltransferase</fullName>
            <ecNumber evidence="1">2.1.1.61</ecNumber>
        </recommendedName>
    </domain>
    <domain>
        <recommendedName>
            <fullName evidence="1">FAD-dependent cmnm(5)s(2)U34 oxidoreductase</fullName>
            <ecNumber evidence="1">1.5.-.-</ecNumber>
        </recommendedName>
    </domain>
</protein>
<dbReference type="EC" id="2.1.1.61" evidence="1"/>
<dbReference type="EC" id="1.5.-.-" evidence="1"/>
<dbReference type="EMBL" id="CP000548">
    <property type="protein sequence ID" value="ABO05705.1"/>
    <property type="status" value="ALT_INIT"/>
    <property type="molecule type" value="Genomic_DNA"/>
</dbReference>
<dbReference type="RefSeq" id="WP_011204185.1">
    <property type="nucleotide sequence ID" value="NZ_CP007802.1"/>
</dbReference>
<dbReference type="SMR" id="A3MQF7"/>
<dbReference type="GeneID" id="92980584"/>
<dbReference type="KEGG" id="bmaz:BM44_374"/>
<dbReference type="KEGG" id="bmn:BMA10247_2973"/>
<dbReference type="PATRIC" id="fig|320389.8.peg.413"/>
<dbReference type="GO" id="GO:0005737">
    <property type="term" value="C:cytoplasm"/>
    <property type="evidence" value="ECO:0007669"/>
    <property type="project" value="UniProtKB-SubCell"/>
</dbReference>
<dbReference type="GO" id="GO:0050660">
    <property type="term" value="F:flavin adenine dinucleotide binding"/>
    <property type="evidence" value="ECO:0007669"/>
    <property type="project" value="UniProtKB-UniRule"/>
</dbReference>
<dbReference type="GO" id="GO:0016645">
    <property type="term" value="F:oxidoreductase activity, acting on the CH-NH group of donors"/>
    <property type="evidence" value="ECO:0007669"/>
    <property type="project" value="InterPro"/>
</dbReference>
<dbReference type="GO" id="GO:0004808">
    <property type="term" value="F:tRNA (5-methylaminomethyl-2-thiouridylate)(34)-methyltransferase activity"/>
    <property type="evidence" value="ECO:0007669"/>
    <property type="project" value="UniProtKB-EC"/>
</dbReference>
<dbReference type="GO" id="GO:0032259">
    <property type="term" value="P:methylation"/>
    <property type="evidence" value="ECO:0007669"/>
    <property type="project" value="UniProtKB-KW"/>
</dbReference>
<dbReference type="GO" id="GO:0002097">
    <property type="term" value="P:tRNA wobble base modification"/>
    <property type="evidence" value="ECO:0007669"/>
    <property type="project" value="UniProtKB-UniRule"/>
</dbReference>
<dbReference type="Gene3D" id="3.30.9.10">
    <property type="entry name" value="D-Amino Acid Oxidase, subunit A, domain 2"/>
    <property type="match status" value="1"/>
</dbReference>
<dbReference type="Gene3D" id="3.50.50.60">
    <property type="entry name" value="FAD/NAD(P)-binding domain"/>
    <property type="match status" value="1"/>
</dbReference>
<dbReference type="Gene3D" id="3.40.50.150">
    <property type="entry name" value="Vaccinia Virus protein VP39"/>
    <property type="match status" value="1"/>
</dbReference>
<dbReference type="HAMAP" id="MF_01102">
    <property type="entry name" value="MnmC"/>
    <property type="match status" value="1"/>
</dbReference>
<dbReference type="InterPro" id="IPR006076">
    <property type="entry name" value="FAD-dep_OxRdtase"/>
</dbReference>
<dbReference type="InterPro" id="IPR036188">
    <property type="entry name" value="FAD/NAD-bd_sf"/>
</dbReference>
<dbReference type="InterPro" id="IPR008471">
    <property type="entry name" value="MnmC-like_methylTransf"/>
</dbReference>
<dbReference type="InterPro" id="IPR029063">
    <property type="entry name" value="SAM-dependent_MTases_sf"/>
</dbReference>
<dbReference type="InterPro" id="IPR023032">
    <property type="entry name" value="tRNA_MAMT_biosynth_bifunc_MnmC"/>
</dbReference>
<dbReference type="InterPro" id="IPR047785">
    <property type="entry name" value="tRNA_MNMC2"/>
</dbReference>
<dbReference type="InterPro" id="IPR017610">
    <property type="entry name" value="tRNA_S-uridine_synth_MnmC_C"/>
</dbReference>
<dbReference type="NCBIfam" id="TIGR03197">
    <property type="entry name" value="MnmC_Cterm"/>
    <property type="match status" value="1"/>
</dbReference>
<dbReference type="NCBIfam" id="NF002481">
    <property type="entry name" value="PRK01747.1-2"/>
    <property type="match status" value="1"/>
</dbReference>
<dbReference type="NCBIfam" id="NF002483">
    <property type="entry name" value="PRK01747.1-4"/>
    <property type="match status" value="1"/>
</dbReference>
<dbReference type="NCBIfam" id="NF033855">
    <property type="entry name" value="tRNA_MNMC2"/>
    <property type="match status" value="1"/>
</dbReference>
<dbReference type="PANTHER" id="PTHR13847">
    <property type="entry name" value="SARCOSINE DEHYDROGENASE-RELATED"/>
    <property type="match status" value="1"/>
</dbReference>
<dbReference type="PANTHER" id="PTHR13847:SF283">
    <property type="entry name" value="TRNA 5-METHYLAMINOMETHYL-2-THIOURIDINE BIOSYNTHESIS BIFUNCTIONAL PROTEIN MNMC"/>
    <property type="match status" value="1"/>
</dbReference>
<dbReference type="Pfam" id="PF01266">
    <property type="entry name" value="DAO"/>
    <property type="match status" value="1"/>
</dbReference>
<dbReference type="Pfam" id="PF05430">
    <property type="entry name" value="Methyltransf_30"/>
    <property type="match status" value="1"/>
</dbReference>
<dbReference type="SUPFAM" id="SSF54373">
    <property type="entry name" value="FAD-linked reductases, C-terminal domain"/>
    <property type="match status" value="1"/>
</dbReference>
<dbReference type="SUPFAM" id="SSF51905">
    <property type="entry name" value="FAD/NAD(P)-binding domain"/>
    <property type="match status" value="1"/>
</dbReference>
<feature type="chain" id="PRO_0000347954" description="tRNA 5-methylaminomethyl-2-thiouridine biosynthesis bifunctional protein MnmC">
    <location>
        <begin position="1"/>
        <end position="660"/>
    </location>
</feature>
<feature type="region of interest" description="tRNA (mnm(5)s(2)U34)-methyltransferase">
    <location>
        <begin position="1"/>
        <end position="242"/>
    </location>
</feature>
<feature type="region of interest" description="FAD-dependent cmnm(5)s(2)U34 oxidoreductase">
    <location>
        <begin position="266"/>
        <end position="660"/>
    </location>
</feature>
<comment type="function">
    <text evidence="1">Catalyzes the last two steps in the biosynthesis of 5-methylaminomethyl-2-thiouridine (mnm(5)s(2)U) at the wobble position (U34) in tRNA. Catalyzes the FAD-dependent demodification of cmnm(5)s(2)U34 to nm(5)s(2)U34, followed by the transfer of a methyl group from S-adenosyl-L-methionine to nm(5)s(2)U34, to form mnm(5)s(2)U34.</text>
</comment>
<comment type="catalytic activity">
    <reaction evidence="1">
        <text>5-aminomethyl-2-thiouridine(34) in tRNA + S-adenosyl-L-methionine = 5-methylaminomethyl-2-thiouridine(34) in tRNA + S-adenosyl-L-homocysteine + H(+)</text>
        <dbReference type="Rhea" id="RHEA:19569"/>
        <dbReference type="Rhea" id="RHEA-COMP:10195"/>
        <dbReference type="Rhea" id="RHEA-COMP:10197"/>
        <dbReference type="ChEBI" id="CHEBI:15378"/>
        <dbReference type="ChEBI" id="CHEBI:57856"/>
        <dbReference type="ChEBI" id="CHEBI:59789"/>
        <dbReference type="ChEBI" id="CHEBI:74454"/>
        <dbReference type="ChEBI" id="CHEBI:74455"/>
        <dbReference type="EC" id="2.1.1.61"/>
    </reaction>
</comment>
<comment type="cofactor">
    <cofactor evidence="1">
        <name>FAD</name>
        <dbReference type="ChEBI" id="CHEBI:57692"/>
    </cofactor>
</comment>
<comment type="subcellular location">
    <subcellularLocation>
        <location evidence="1">Cytoplasm</location>
    </subcellularLocation>
</comment>
<comment type="similarity">
    <text evidence="1">In the N-terminal section; belongs to the methyltransferase superfamily. tRNA (mnm(5)s(2)U34)-methyltransferase family.</text>
</comment>
<comment type="similarity">
    <text evidence="1">In the C-terminal section; belongs to the DAO family.</text>
</comment>
<comment type="sequence caution" evidence="2">
    <conflict type="erroneous initiation">
        <sequence resource="EMBL-CDS" id="ABO05705"/>
    </conflict>
</comment>
<evidence type="ECO:0000255" key="1">
    <source>
        <dbReference type="HAMAP-Rule" id="MF_01102"/>
    </source>
</evidence>
<evidence type="ECO:0000305" key="2"/>
<keyword id="KW-0963">Cytoplasm</keyword>
<keyword id="KW-0274">FAD</keyword>
<keyword id="KW-0285">Flavoprotein</keyword>
<keyword id="KW-0489">Methyltransferase</keyword>
<keyword id="KW-0511">Multifunctional enzyme</keyword>
<keyword id="KW-0560">Oxidoreductase</keyword>
<keyword id="KW-0949">S-adenosyl-L-methionine</keyword>
<keyword id="KW-0808">Transferase</keyword>
<keyword id="KW-0819">tRNA processing</keyword>
<name>MNMC_BURM7</name>